<feature type="chain" id="PRO_0000083020" description="Methionyl-tRNA formyltransferase">
    <location>
        <begin position="1"/>
        <end position="327"/>
    </location>
</feature>
<feature type="binding site" evidence="1">
    <location>
        <begin position="122"/>
        <end position="125"/>
    </location>
    <ligand>
        <name>(6S)-5,6,7,8-tetrahydrofolate</name>
        <dbReference type="ChEBI" id="CHEBI:57453"/>
    </ligand>
</feature>
<organism>
    <name type="scientific">Ralstonia nicotianae (strain ATCC BAA-1114 / GMI1000)</name>
    <name type="common">Ralstonia solanacearum</name>
    <dbReference type="NCBI Taxonomy" id="267608"/>
    <lineage>
        <taxon>Bacteria</taxon>
        <taxon>Pseudomonadati</taxon>
        <taxon>Pseudomonadota</taxon>
        <taxon>Betaproteobacteria</taxon>
        <taxon>Burkholderiales</taxon>
        <taxon>Burkholderiaceae</taxon>
        <taxon>Ralstonia</taxon>
        <taxon>Ralstonia solanacearum species complex</taxon>
    </lineage>
</organism>
<reference key="1">
    <citation type="journal article" date="2002" name="Nature">
        <title>Genome sequence of the plant pathogen Ralstonia solanacearum.</title>
        <authorList>
            <person name="Salanoubat M."/>
            <person name="Genin S."/>
            <person name="Artiguenave F."/>
            <person name="Gouzy J."/>
            <person name="Mangenot S."/>
            <person name="Arlat M."/>
            <person name="Billault A."/>
            <person name="Brottier P."/>
            <person name="Camus J.-C."/>
            <person name="Cattolico L."/>
            <person name="Chandler M."/>
            <person name="Choisne N."/>
            <person name="Claudel-Renard C."/>
            <person name="Cunnac S."/>
            <person name="Demange N."/>
            <person name="Gaspin C."/>
            <person name="Lavie M."/>
            <person name="Moisan A."/>
            <person name="Robert C."/>
            <person name="Saurin W."/>
            <person name="Schiex T."/>
            <person name="Siguier P."/>
            <person name="Thebault P."/>
            <person name="Whalen M."/>
            <person name="Wincker P."/>
            <person name="Levy M."/>
            <person name="Weissenbach J."/>
            <person name="Boucher C.A."/>
        </authorList>
    </citation>
    <scope>NUCLEOTIDE SEQUENCE [LARGE SCALE GENOMIC DNA]</scope>
    <source>
        <strain>ATCC BAA-1114 / GMI1000</strain>
    </source>
</reference>
<gene>
    <name evidence="1" type="primary">fmt</name>
    <name type="ordered locus">RSc0072</name>
    <name type="ORF">RS02250</name>
</gene>
<evidence type="ECO:0000255" key="1">
    <source>
        <dbReference type="HAMAP-Rule" id="MF_00182"/>
    </source>
</evidence>
<evidence type="ECO:0000305" key="2"/>
<keyword id="KW-0648">Protein biosynthesis</keyword>
<keyword id="KW-1185">Reference proteome</keyword>
<keyword id="KW-0808">Transferase</keyword>
<sequence>MTSTLRVAFAGTPEFAQIALAALHQAGLPIVAVLSQPDRPAGRGMHLQASPVKQYAVSHGLGPVLQPPSLRRTGKYPQEAAAAIDALSAQQPDVMVVAAYGLILPQEVLDLPRFGCINIHGSLLPRWRGAAPIHRAIEAGDAETGITLMQMDAGLDTGDMIAMEHVPIGLTDTTGTLHDTLAALGGRMVVEALARLAQDGSLPATPQPAEGVTYAEKIAKEEAALDWSRQSAALLRQVHAFNPFPGASAELDGVSIKFWQAEALPDRPADAQPGAVLAADADGVVIACGAGALRVTQLQKPGGKRLPAREFLQGLPIRPGQRFASRA</sequence>
<dbReference type="EC" id="2.1.2.9" evidence="1"/>
<dbReference type="EMBL" id="AL646052">
    <property type="protein sequence ID" value="CAD13600.1"/>
    <property type="molecule type" value="Genomic_DNA"/>
</dbReference>
<dbReference type="RefSeq" id="WP_011000039.1">
    <property type="nucleotide sequence ID" value="NC_003295.1"/>
</dbReference>
<dbReference type="SMR" id="Q8Y3A8"/>
<dbReference type="STRING" id="267608.RSc0072"/>
<dbReference type="EnsemblBacteria" id="CAD13600">
    <property type="protein sequence ID" value="CAD13600"/>
    <property type="gene ID" value="RSc0072"/>
</dbReference>
<dbReference type="KEGG" id="rso:RSc0072"/>
<dbReference type="PATRIC" id="fig|267608.8.peg.78"/>
<dbReference type="eggNOG" id="COG0223">
    <property type="taxonomic scope" value="Bacteria"/>
</dbReference>
<dbReference type="HOGENOM" id="CLU_033347_1_2_4"/>
<dbReference type="Proteomes" id="UP000001436">
    <property type="component" value="Chromosome"/>
</dbReference>
<dbReference type="GO" id="GO:0005829">
    <property type="term" value="C:cytosol"/>
    <property type="evidence" value="ECO:0007669"/>
    <property type="project" value="TreeGrafter"/>
</dbReference>
<dbReference type="GO" id="GO:0004479">
    <property type="term" value="F:methionyl-tRNA formyltransferase activity"/>
    <property type="evidence" value="ECO:0007669"/>
    <property type="project" value="UniProtKB-UniRule"/>
</dbReference>
<dbReference type="CDD" id="cd08646">
    <property type="entry name" value="FMT_core_Met-tRNA-FMT_N"/>
    <property type="match status" value="1"/>
</dbReference>
<dbReference type="CDD" id="cd08704">
    <property type="entry name" value="Met_tRNA_FMT_C"/>
    <property type="match status" value="1"/>
</dbReference>
<dbReference type="Gene3D" id="3.10.25.10">
    <property type="entry name" value="Formyl transferase, C-terminal domain"/>
    <property type="match status" value="1"/>
</dbReference>
<dbReference type="Gene3D" id="3.40.50.170">
    <property type="entry name" value="Formyl transferase, N-terminal domain"/>
    <property type="match status" value="1"/>
</dbReference>
<dbReference type="HAMAP" id="MF_00182">
    <property type="entry name" value="Formyl_trans"/>
    <property type="match status" value="1"/>
</dbReference>
<dbReference type="InterPro" id="IPR005794">
    <property type="entry name" value="Fmt"/>
</dbReference>
<dbReference type="InterPro" id="IPR005793">
    <property type="entry name" value="Formyl_trans_C"/>
</dbReference>
<dbReference type="InterPro" id="IPR037022">
    <property type="entry name" value="Formyl_trans_C_sf"/>
</dbReference>
<dbReference type="InterPro" id="IPR002376">
    <property type="entry name" value="Formyl_transf_N"/>
</dbReference>
<dbReference type="InterPro" id="IPR036477">
    <property type="entry name" value="Formyl_transf_N_sf"/>
</dbReference>
<dbReference type="InterPro" id="IPR011034">
    <property type="entry name" value="Formyl_transferase-like_C_sf"/>
</dbReference>
<dbReference type="InterPro" id="IPR001555">
    <property type="entry name" value="GART_AS"/>
</dbReference>
<dbReference type="InterPro" id="IPR044135">
    <property type="entry name" value="Met-tRNA-FMT_C"/>
</dbReference>
<dbReference type="InterPro" id="IPR041711">
    <property type="entry name" value="Met-tRNA-FMT_N"/>
</dbReference>
<dbReference type="NCBIfam" id="TIGR00460">
    <property type="entry name" value="fmt"/>
    <property type="match status" value="1"/>
</dbReference>
<dbReference type="PANTHER" id="PTHR11138">
    <property type="entry name" value="METHIONYL-TRNA FORMYLTRANSFERASE"/>
    <property type="match status" value="1"/>
</dbReference>
<dbReference type="PANTHER" id="PTHR11138:SF5">
    <property type="entry name" value="METHIONYL-TRNA FORMYLTRANSFERASE, MITOCHONDRIAL"/>
    <property type="match status" value="1"/>
</dbReference>
<dbReference type="Pfam" id="PF02911">
    <property type="entry name" value="Formyl_trans_C"/>
    <property type="match status" value="1"/>
</dbReference>
<dbReference type="Pfam" id="PF00551">
    <property type="entry name" value="Formyl_trans_N"/>
    <property type="match status" value="1"/>
</dbReference>
<dbReference type="SUPFAM" id="SSF50486">
    <property type="entry name" value="FMT C-terminal domain-like"/>
    <property type="match status" value="1"/>
</dbReference>
<dbReference type="SUPFAM" id="SSF53328">
    <property type="entry name" value="Formyltransferase"/>
    <property type="match status" value="1"/>
</dbReference>
<dbReference type="PROSITE" id="PS00373">
    <property type="entry name" value="GART"/>
    <property type="match status" value="1"/>
</dbReference>
<protein>
    <recommendedName>
        <fullName evidence="1">Methionyl-tRNA formyltransferase</fullName>
        <ecNumber evidence="1">2.1.2.9</ecNumber>
    </recommendedName>
</protein>
<comment type="function">
    <text evidence="1">Attaches a formyl group to the free amino group of methionyl-tRNA(fMet). The formyl group appears to play a dual role in the initiator identity of N-formylmethionyl-tRNA by promoting its recognition by IF2 and preventing the misappropriation of this tRNA by the elongation apparatus.</text>
</comment>
<comment type="catalytic activity">
    <reaction evidence="1">
        <text>L-methionyl-tRNA(fMet) + (6R)-10-formyltetrahydrofolate = N-formyl-L-methionyl-tRNA(fMet) + (6S)-5,6,7,8-tetrahydrofolate + H(+)</text>
        <dbReference type="Rhea" id="RHEA:24380"/>
        <dbReference type="Rhea" id="RHEA-COMP:9952"/>
        <dbReference type="Rhea" id="RHEA-COMP:9953"/>
        <dbReference type="ChEBI" id="CHEBI:15378"/>
        <dbReference type="ChEBI" id="CHEBI:57453"/>
        <dbReference type="ChEBI" id="CHEBI:78530"/>
        <dbReference type="ChEBI" id="CHEBI:78844"/>
        <dbReference type="ChEBI" id="CHEBI:195366"/>
        <dbReference type="EC" id="2.1.2.9"/>
    </reaction>
</comment>
<comment type="similarity">
    <text evidence="1 2">Belongs to the Fmt family.</text>
</comment>
<proteinExistence type="inferred from homology"/>
<accession>Q8Y3A8</accession>
<name>FMT_RALN1</name>